<keyword id="KW-0256">Endoplasmic reticulum</keyword>
<keyword id="KW-0325">Glycoprotein</keyword>
<keyword id="KW-0328">Glycosyltransferase</keyword>
<keyword id="KW-0337">GPI-anchor biosynthesis</keyword>
<keyword id="KW-0472">Membrane</keyword>
<keyword id="KW-1185">Reference proteome</keyword>
<keyword id="KW-0808">Transferase</keyword>
<keyword id="KW-0812">Transmembrane</keyword>
<keyword id="KW-1133">Transmembrane helix</keyword>
<name>SMP3_SCHPO</name>
<reference key="1">
    <citation type="journal article" date="2002" name="Nature">
        <title>The genome sequence of Schizosaccharomyces pombe.</title>
        <authorList>
            <person name="Wood V."/>
            <person name="Gwilliam R."/>
            <person name="Rajandream M.A."/>
            <person name="Lyne M.H."/>
            <person name="Lyne R."/>
            <person name="Stewart A."/>
            <person name="Sgouros J.G."/>
            <person name="Peat N."/>
            <person name="Hayles J."/>
            <person name="Baker S.G."/>
            <person name="Basham D."/>
            <person name="Bowman S."/>
            <person name="Brooks K."/>
            <person name="Brown D."/>
            <person name="Brown S."/>
            <person name="Chillingworth T."/>
            <person name="Churcher C.M."/>
            <person name="Collins M."/>
            <person name="Connor R."/>
            <person name="Cronin A."/>
            <person name="Davis P."/>
            <person name="Feltwell T."/>
            <person name="Fraser A."/>
            <person name="Gentles S."/>
            <person name="Goble A."/>
            <person name="Hamlin N."/>
            <person name="Harris D.E."/>
            <person name="Hidalgo J."/>
            <person name="Hodgson G."/>
            <person name="Holroyd S."/>
            <person name="Hornsby T."/>
            <person name="Howarth S."/>
            <person name="Huckle E.J."/>
            <person name="Hunt S."/>
            <person name="Jagels K."/>
            <person name="James K.D."/>
            <person name="Jones L."/>
            <person name="Jones M."/>
            <person name="Leather S."/>
            <person name="McDonald S."/>
            <person name="McLean J."/>
            <person name="Mooney P."/>
            <person name="Moule S."/>
            <person name="Mungall K.L."/>
            <person name="Murphy L.D."/>
            <person name="Niblett D."/>
            <person name="Odell C."/>
            <person name="Oliver K."/>
            <person name="O'Neil S."/>
            <person name="Pearson D."/>
            <person name="Quail M.A."/>
            <person name="Rabbinowitsch E."/>
            <person name="Rutherford K.M."/>
            <person name="Rutter S."/>
            <person name="Saunders D."/>
            <person name="Seeger K."/>
            <person name="Sharp S."/>
            <person name="Skelton J."/>
            <person name="Simmonds M.N."/>
            <person name="Squares R."/>
            <person name="Squares S."/>
            <person name="Stevens K."/>
            <person name="Taylor K."/>
            <person name="Taylor R.G."/>
            <person name="Tivey A."/>
            <person name="Walsh S.V."/>
            <person name="Warren T."/>
            <person name="Whitehead S."/>
            <person name="Woodward J.R."/>
            <person name="Volckaert G."/>
            <person name="Aert R."/>
            <person name="Robben J."/>
            <person name="Grymonprez B."/>
            <person name="Weltjens I."/>
            <person name="Vanstreels E."/>
            <person name="Rieger M."/>
            <person name="Schaefer M."/>
            <person name="Mueller-Auer S."/>
            <person name="Gabel C."/>
            <person name="Fuchs M."/>
            <person name="Duesterhoeft A."/>
            <person name="Fritzc C."/>
            <person name="Holzer E."/>
            <person name="Moestl D."/>
            <person name="Hilbert H."/>
            <person name="Borzym K."/>
            <person name="Langer I."/>
            <person name="Beck A."/>
            <person name="Lehrach H."/>
            <person name="Reinhardt R."/>
            <person name="Pohl T.M."/>
            <person name="Eger P."/>
            <person name="Zimmermann W."/>
            <person name="Wedler H."/>
            <person name="Wambutt R."/>
            <person name="Purnelle B."/>
            <person name="Goffeau A."/>
            <person name="Cadieu E."/>
            <person name="Dreano S."/>
            <person name="Gloux S."/>
            <person name="Lelaure V."/>
            <person name="Mottier S."/>
            <person name="Galibert F."/>
            <person name="Aves S.J."/>
            <person name="Xiang Z."/>
            <person name="Hunt C."/>
            <person name="Moore K."/>
            <person name="Hurst S.M."/>
            <person name="Lucas M."/>
            <person name="Rochet M."/>
            <person name="Gaillardin C."/>
            <person name="Tallada V.A."/>
            <person name="Garzon A."/>
            <person name="Thode G."/>
            <person name="Daga R.R."/>
            <person name="Cruzado L."/>
            <person name="Jimenez J."/>
            <person name="Sanchez M."/>
            <person name="del Rey F."/>
            <person name="Benito J."/>
            <person name="Dominguez A."/>
            <person name="Revuelta J.L."/>
            <person name="Moreno S."/>
            <person name="Armstrong J."/>
            <person name="Forsburg S.L."/>
            <person name="Cerutti L."/>
            <person name="Lowe T."/>
            <person name="McCombie W.R."/>
            <person name="Paulsen I."/>
            <person name="Potashkin J."/>
            <person name="Shpakovski G.V."/>
            <person name="Ussery D."/>
            <person name="Barrell B.G."/>
            <person name="Nurse P."/>
        </authorList>
    </citation>
    <scope>NUCLEOTIDE SEQUENCE [LARGE SCALE GENOMIC DNA]</scope>
    <source>
        <strain>972 / ATCC 24843</strain>
    </source>
</reference>
<comment type="function">
    <text evidence="1">Alpha-1,2-mannosyltransferase involved in glycosylphosphatidylinositol-anchor biosynthesis. Transfers a fourth mannose to trimannosyl-GPIs during GPI precursor assembly. The presence of a fourth mannose in GPI is essential in fungi (By similarity).</text>
</comment>
<comment type="pathway">
    <text>Glycolipid biosynthesis; glycosylphosphatidylinositol-anchor biosynthesis.</text>
</comment>
<comment type="subcellular location">
    <subcellularLocation>
        <location evidence="1">Endoplasmic reticulum membrane</location>
        <topology evidence="1">Multi-pass membrane protein</topology>
    </subcellularLocation>
</comment>
<comment type="similarity">
    <text evidence="3">Belongs to the glycosyltransferase 22 family. PIGZ subfamily.</text>
</comment>
<evidence type="ECO:0000250" key="1"/>
<evidence type="ECO:0000255" key="2"/>
<evidence type="ECO:0000305" key="3"/>
<feature type="chain" id="PRO_0000215790" description="GPI mannosyltransferase 4">
    <location>
        <begin position="1"/>
        <end position="533"/>
    </location>
</feature>
<feature type="transmembrane region" description="Helical" evidence="2">
    <location>
        <begin position="8"/>
        <end position="28"/>
    </location>
</feature>
<feature type="transmembrane region" description="Helical" evidence="2">
    <location>
        <begin position="61"/>
        <end position="81"/>
    </location>
</feature>
<feature type="transmembrane region" description="Helical" evidence="2">
    <location>
        <begin position="91"/>
        <end position="111"/>
    </location>
</feature>
<feature type="transmembrane region" description="Helical" evidence="2">
    <location>
        <begin position="144"/>
        <end position="164"/>
    </location>
</feature>
<feature type="transmembrane region" description="Helical" evidence="2">
    <location>
        <begin position="175"/>
        <end position="195"/>
    </location>
</feature>
<feature type="transmembrane region" description="Helical" evidence="2">
    <location>
        <begin position="216"/>
        <end position="236"/>
    </location>
</feature>
<feature type="transmembrane region" description="Helical" evidence="2">
    <location>
        <begin position="274"/>
        <end position="294"/>
    </location>
</feature>
<feature type="transmembrane region" description="Helical" evidence="2">
    <location>
        <begin position="297"/>
        <end position="317"/>
    </location>
</feature>
<feature type="transmembrane region" description="Helical" evidence="2">
    <location>
        <begin position="319"/>
        <end position="335"/>
    </location>
</feature>
<feature type="transmembrane region" description="Helical" evidence="2">
    <location>
        <begin position="338"/>
        <end position="358"/>
    </location>
</feature>
<feature type="glycosylation site" description="N-linked (GlcNAc...) asparagine" evidence="2">
    <location>
        <position position="261"/>
    </location>
</feature>
<feature type="glycosylation site" description="N-linked (GlcNAc...) asparagine" evidence="2">
    <location>
        <position position="378"/>
    </location>
</feature>
<feature type="glycosylation site" description="N-linked (GlcNAc...) asparagine" evidence="2">
    <location>
        <position position="419"/>
    </location>
</feature>
<feature type="glycosylation site" description="N-linked (GlcNAc...) asparagine" evidence="2">
    <location>
        <position position="425"/>
    </location>
</feature>
<feature type="glycosylation site" description="N-linked (GlcNAc...) asparagine" evidence="2">
    <location>
        <position position="452"/>
    </location>
</feature>
<feature type="glycosylation site" description="N-linked (GlcNAc...) asparagine" evidence="2">
    <location>
        <position position="477"/>
    </location>
</feature>
<feature type="glycosylation site" description="N-linked (GlcNAc...) asparagine" evidence="2">
    <location>
        <position position="518"/>
    </location>
</feature>
<dbReference type="EC" id="2.4.1.-"/>
<dbReference type="EMBL" id="CU329670">
    <property type="protein sequence ID" value="CAA91213.1"/>
    <property type="molecule type" value="Genomic_DNA"/>
</dbReference>
<dbReference type="PIR" id="T38857">
    <property type="entry name" value="S62489"/>
</dbReference>
<dbReference type="RefSeq" id="NP_593072.1">
    <property type="nucleotide sequence ID" value="NM_001018470.2"/>
</dbReference>
<dbReference type="FunCoup" id="Q09837">
    <property type="interactions" value="113"/>
</dbReference>
<dbReference type="STRING" id="284812.Q09837"/>
<dbReference type="CAZy" id="GT22">
    <property type="family name" value="Glycosyltransferase Family 22"/>
</dbReference>
<dbReference type="GlyCosmos" id="Q09837">
    <property type="glycosylation" value="7 sites, No reported glycans"/>
</dbReference>
<dbReference type="iPTMnet" id="Q09837"/>
<dbReference type="PaxDb" id="4896-SPAC4G8.12c.1"/>
<dbReference type="EnsemblFungi" id="SPAC4G8.12c.1">
    <property type="protein sequence ID" value="SPAC4G8.12c.1:pep"/>
    <property type="gene ID" value="SPAC4G8.12c"/>
</dbReference>
<dbReference type="GeneID" id="2542832"/>
<dbReference type="KEGG" id="spo:2542832"/>
<dbReference type="PomBase" id="SPAC4G8.12c">
    <property type="gene designation" value="smp3"/>
</dbReference>
<dbReference type="VEuPathDB" id="FungiDB:SPAC4G8.12c"/>
<dbReference type="eggNOG" id="KOG4123">
    <property type="taxonomic scope" value="Eukaryota"/>
</dbReference>
<dbReference type="HOGENOM" id="CLU_022957_2_0_1"/>
<dbReference type="InParanoid" id="Q09837"/>
<dbReference type="OMA" id="GIMHQNG"/>
<dbReference type="PhylomeDB" id="Q09837"/>
<dbReference type="Reactome" id="R-SPO-162710">
    <property type="pathway name" value="Synthesis of glycosylphosphatidylinositol (GPI)"/>
</dbReference>
<dbReference type="UniPathway" id="UPA00196"/>
<dbReference type="PRO" id="PR:Q09837"/>
<dbReference type="Proteomes" id="UP000002485">
    <property type="component" value="Chromosome I"/>
</dbReference>
<dbReference type="GO" id="GO:0005783">
    <property type="term" value="C:endoplasmic reticulum"/>
    <property type="evidence" value="ECO:0007005"/>
    <property type="project" value="PomBase"/>
</dbReference>
<dbReference type="GO" id="GO:0005789">
    <property type="term" value="C:endoplasmic reticulum membrane"/>
    <property type="evidence" value="ECO:0000318"/>
    <property type="project" value="GO_Central"/>
</dbReference>
<dbReference type="GO" id="GO:0000026">
    <property type="term" value="F:alpha-1,2-mannosyltransferase activity"/>
    <property type="evidence" value="ECO:0000318"/>
    <property type="project" value="GO_Central"/>
</dbReference>
<dbReference type="GO" id="GO:0006506">
    <property type="term" value="P:GPI anchor biosynthetic process"/>
    <property type="evidence" value="ECO:0000318"/>
    <property type="project" value="GO_Central"/>
</dbReference>
<dbReference type="InterPro" id="IPR005599">
    <property type="entry name" value="GPI_mannosylTrfase"/>
</dbReference>
<dbReference type="PANTHER" id="PTHR22760">
    <property type="entry name" value="GLYCOSYLTRANSFERASE"/>
    <property type="match status" value="1"/>
</dbReference>
<dbReference type="PANTHER" id="PTHR22760:SF3">
    <property type="entry name" value="GPI MANNOSYLTRANSFERASE 4"/>
    <property type="match status" value="1"/>
</dbReference>
<dbReference type="Pfam" id="PF03901">
    <property type="entry name" value="Glyco_transf_22"/>
    <property type="match status" value="1"/>
</dbReference>
<gene>
    <name type="primary">smp3</name>
    <name type="ORF">SPAC4G8.12c</name>
</gene>
<accession>Q09837</accession>
<sequence length="533" mass="62201">MFKNRKYAIIYTFLLILRFWFSQGSSYIHPDEHLQSFQIFANKLFGWKVELPWEFTTKKPIRSVVPLNVMLLPIFLLCRCICKSNCSPYPILLFTRLYMCLISLLIDLSIWNIVPLNARWSALLLYSSSFMATTFQTHTFTNSIETIFFFLTILFLSKLNSVPLNKKISYLYTFLLAIVSVLGFFTRITFLAFVIAPYIYFSVRCFKKNVNNPKDIFLHLCIFVSVSFATVLACILEDYKFYGVFVITFWNNLKYNSQIENLSQHGLHSRLTHFFTNMPLLCGPLIFVPKLWDVRKPATWLWLLPVFILSLFPHQEPRFLLPAASIFIVNSGCLVRSYWIKFLFVMYAVVLAVFFGIMHQNGVIPAVLEVKNIIEQRNVTTMENCNLYFNPEMPTTIYFWKIYSAPTWMLARPKFSQINTSHLYNYSTKQMISKFWETYYEEVKVVNLPEENTTEFQASTLLVCPVAMLQTSSYLQNLTMLHYIPYHVDLDDTDELPLAELIMNHGIGIFTAKEICENNTITNELPTVLRSVG</sequence>
<protein>
    <recommendedName>
        <fullName>GPI mannosyltransferase 4</fullName>
        <ecNumber>2.4.1.-</ecNumber>
    </recommendedName>
    <alternativeName>
        <fullName>GPI mannosyltransferase IV</fullName>
        <shortName>GPI-MT-IV</shortName>
    </alternativeName>
</protein>
<proteinExistence type="inferred from homology"/>
<organism>
    <name type="scientific">Schizosaccharomyces pombe (strain 972 / ATCC 24843)</name>
    <name type="common">Fission yeast</name>
    <dbReference type="NCBI Taxonomy" id="284812"/>
    <lineage>
        <taxon>Eukaryota</taxon>
        <taxon>Fungi</taxon>
        <taxon>Dikarya</taxon>
        <taxon>Ascomycota</taxon>
        <taxon>Taphrinomycotina</taxon>
        <taxon>Schizosaccharomycetes</taxon>
        <taxon>Schizosaccharomycetales</taxon>
        <taxon>Schizosaccharomycetaceae</taxon>
        <taxon>Schizosaccharomyces</taxon>
    </lineage>
</organism>